<proteinExistence type="inferred from homology"/>
<dbReference type="EC" id="2.7.1.50" evidence="1"/>
<dbReference type="EMBL" id="AE014295">
    <property type="protein sequence ID" value="AAN23980.1"/>
    <property type="molecule type" value="Genomic_DNA"/>
</dbReference>
<dbReference type="RefSeq" id="NP_695344.1">
    <property type="nucleotide sequence ID" value="NC_004307.2"/>
</dbReference>
<dbReference type="RefSeq" id="WP_011067966.1">
    <property type="nucleotide sequence ID" value="NC_004307.2"/>
</dbReference>
<dbReference type="SMR" id="Q8G7X0"/>
<dbReference type="STRING" id="206672.BL0115"/>
<dbReference type="EnsemblBacteria" id="AAN23980">
    <property type="protein sequence ID" value="AAN23980"/>
    <property type="gene ID" value="BL0115"/>
</dbReference>
<dbReference type="KEGG" id="blo:BL0115"/>
<dbReference type="PATRIC" id="fig|206672.9.peg.123"/>
<dbReference type="HOGENOM" id="CLU_019943_0_1_11"/>
<dbReference type="OrthoDB" id="8909021at2"/>
<dbReference type="PhylomeDB" id="Q8G7X0"/>
<dbReference type="UniPathway" id="UPA00060">
    <property type="reaction ID" value="UER00139"/>
</dbReference>
<dbReference type="Proteomes" id="UP000000439">
    <property type="component" value="Chromosome"/>
</dbReference>
<dbReference type="GO" id="GO:0005524">
    <property type="term" value="F:ATP binding"/>
    <property type="evidence" value="ECO:0007669"/>
    <property type="project" value="UniProtKB-UniRule"/>
</dbReference>
<dbReference type="GO" id="GO:0004417">
    <property type="term" value="F:hydroxyethylthiazole kinase activity"/>
    <property type="evidence" value="ECO:0007669"/>
    <property type="project" value="UniProtKB-UniRule"/>
</dbReference>
<dbReference type="GO" id="GO:0000287">
    <property type="term" value="F:magnesium ion binding"/>
    <property type="evidence" value="ECO:0007669"/>
    <property type="project" value="UniProtKB-UniRule"/>
</dbReference>
<dbReference type="GO" id="GO:0009228">
    <property type="term" value="P:thiamine biosynthetic process"/>
    <property type="evidence" value="ECO:0007669"/>
    <property type="project" value="UniProtKB-KW"/>
</dbReference>
<dbReference type="GO" id="GO:0009229">
    <property type="term" value="P:thiamine diphosphate biosynthetic process"/>
    <property type="evidence" value="ECO:0007669"/>
    <property type="project" value="UniProtKB-UniRule"/>
</dbReference>
<dbReference type="CDD" id="cd01170">
    <property type="entry name" value="THZ_kinase"/>
    <property type="match status" value="1"/>
</dbReference>
<dbReference type="Gene3D" id="3.40.1190.20">
    <property type="match status" value="1"/>
</dbReference>
<dbReference type="HAMAP" id="MF_00228">
    <property type="entry name" value="Thz_kinase"/>
    <property type="match status" value="1"/>
</dbReference>
<dbReference type="InterPro" id="IPR000417">
    <property type="entry name" value="Hyethyz_kinase"/>
</dbReference>
<dbReference type="InterPro" id="IPR029056">
    <property type="entry name" value="Ribokinase-like"/>
</dbReference>
<dbReference type="Pfam" id="PF02110">
    <property type="entry name" value="HK"/>
    <property type="match status" value="1"/>
</dbReference>
<dbReference type="PIRSF" id="PIRSF000513">
    <property type="entry name" value="Thz_kinase"/>
    <property type="match status" value="1"/>
</dbReference>
<dbReference type="PRINTS" id="PR01099">
    <property type="entry name" value="HYETHTZKNASE"/>
</dbReference>
<dbReference type="SUPFAM" id="SSF53613">
    <property type="entry name" value="Ribokinase-like"/>
    <property type="match status" value="1"/>
</dbReference>
<evidence type="ECO:0000255" key="1">
    <source>
        <dbReference type="HAMAP-Rule" id="MF_00228"/>
    </source>
</evidence>
<protein>
    <recommendedName>
        <fullName evidence="1">Hydroxyethylthiazole kinase</fullName>
        <ecNumber evidence="1">2.7.1.50</ecNumber>
    </recommendedName>
    <alternativeName>
        <fullName evidence="1">4-methyl-5-beta-hydroxyethylthiazole kinase</fullName>
        <shortName evidence="1">TH kinase</shortName>
        <shortName evidence="1">Thz kinase</shortName>
    </alternativeName>
</protein>
<sequence length="314" mass="32498">MSNSASSFTGVSSGYTAGTPVPADSPIRDNIADAVRRVRETTPLAQSFTNFVTINLVANAQLAAGGTAAMSFLPDDVIETAKIAGANYINVGTLLPFYKDALPEIAQRLNYLDKPWVLDPVAAGIGRTRTAILQAFKAAPPTMIRANASEVIALANMWGLNTETVGDASEHRPAGVESVDDVESATGAAVALAQYLTEQHAKHSSHDASTRCAVAVSGIADLVTDGETVYRLPGGSAMMTKIIGAGCSLGGVAATYLAVSDPLTAALSASLLYNRAGEVADTTSHGPGSFQVAFLDALWNVTAEQVAESEILVQ</sequence>
<keyword id="KW-0067">ATP-binding</keyword>
<keyword id="KW-0418">Kinase</keyword>
<keyword id="KW-0460">Magnesium</keyword>
<keyword id="KW-0479">Metal-binding</keyword>
<keyword id="KW-0547">Nucleotide-binding</keyword>
<keyword id="KW-1185">Reference proteome</keyword>
<keyword id="KW-0784">Thiamine biosynthesis</keyword>
<keyword id="KW-0808">Transferase</keyword>
<feature type="chain" id="PRO_0000383823" description="Hydroxyethylthiazole kinase">
    <location>
        <begin position="1"/>
        <end position="314"/>
    </location>
</feature>
<feature type="binding site" evidence="1">
    <location>
        <position position="70"/>
    </location>
    <ligand>
        <name>substrate</name>
    </ligand>
</feature>
<feature type="binding site" evidence="1">
    <location>
        <position position="145"/>
    </location>
    <ligand>
        <name>ATP</name>
        <dbReference type="ChEBI" id="CHEBI:30616"/>
    </ligand>
</feature>
<feature type="binding site" evidence="1">
    <location>
        <position position="217"/>
    </location>
    <ligand>
        <name>ATP</name>
        <dbReference type="ChEBI" id="CHEBI:30616"/>
    </ligand>
</feature>
<feature type="binding site" evidence="1">
    <location>
        <position position="244"/>
    </location>
    <ligand>
        <name>substrate</name>
    </ligand>
</feature>
<comment type="function">
    <text evidence="1">Catalyzes the phosphorylation of the hydroxyl group of 4-methyl-5-beta-hydroxyethylthiazole (THZ).</text>
</comment>
<comment type="catalytic activity">
    <reaction evidence="1">
        <text>5-(2-hydroxyethyl)-4-methylthiazole + ATP = 4-methyl-5-(2-phosphooxyethyl)-thiazole + ADP + H(+)</text>
        <dbReference type="Rhea" id="RHEA:24212"/>
        <dbReference type="ChEBI" id="CHEBI:15378"/>
        <dbReference type="ChEBI" id="CHEBI:17957"/>
        <dbReference type="ChEBI" id="CHEBI:30616"/>
        <dbReference type="ChEBI" id="CHEBI:58296"/>
        <dbReference type="ChEBI" id="CHEBI:456216"/>
        <dbReference type="EC" id="2.7.1.50"/>
    </reaction>
</comment>
<comment type="cofactor">
    <cofactor evidence="1">
        <name>Mg(2+)</name>
        <dbReference type="ChEBI" id="CHEBI:18420"/>
    </cofactor>
</comment>
<comment type="pathway">
    <text evidence="1">Cofactor biosynthesis; thiamine diphosphate biosynthesis; 4-methyl-5-(2-phosphoethyl)-thiazole from 5-(2-hydroxyethyl)-4-methylthiazole: step 1/1.</text>
</comment>
<comment type="similarity">
    <text evidence="1">Belongs to the Thz kinase family.</text>
</comment>
<gene>
    <name evidence="1" type="primary">thiM</name>
    <name type="ordered locus">BL0115</name>
</gene>
<name>THIM_BIFLO</name>
<reference key="1">
    <citation type="journal article" date="2002" name="Proc. Natl. Acad. Sci. U.S.A.">
        <title>The genome sequence of Bifidobacterium longum reflects its adaptation to the human gastrointestinal tract.</title>
        <authorList>
            <person name="Schell M.A."/>
            <person name="Karmirantzou M."/>
            <person name="Snel B."/>
            <person name="Vilanova D."/>
            <person name="Berger B."/>
            <person name="Pessi G."/>
            <person name="Zwahlen M.-C."/>
            <person name="Desiere F."/>
            <person name="Bork P."/>
            <person name="Delley M."/>
            <person name="Pridmore R.D."/>
            <person name="Arigoni F."/>
        </authorList>
    </citation>
    <scope>NUCLEOTIDE SEQUENCE [LARGE SCALE GENOMIC DNA]</scope>
    <source>
        <strain>NCC 2705</strain>
    </source>
</reference>
<accession>Q8G7X0</accession>
<organism>
    <name type="scientific">Bifidobacterium longum (strain NCC 2705)</name>
    <dbReference type="NCBI Taxonomy" id="206672"/>
    <lineage>
        <taxon>Bacteria</taxon>
        <taxon>Bacillati</taxon>
        <taxon>Actinomycetota</taxon>
        <taxon>Actinomycetes</taxon>
        <taxon>Bifidobacteriales</taxon>
        <taxon>Bifidobacteriaceae</taxon>
        <taxon>Bifidobacterium</taxon>
    </lineage>
</organism>